<feature type="chain" id="PRO_0000190678" description="UPF0758 protein BA_4685/GBAA_4685/BAS4351">
    <location>
        <begin position="1"/>
        <end position="225"/>
    </location>
</feature>
<feature type="domain" description="MPN" evidence="1">
    <location>
        <begin position="103"/>
        <end position="225"/>
    </location>
</feature>
<feature type="short sequence motif" description="JAMM motif" evidence="1">
    <location>
        <begin position="174"/>
        <end position="187"/>
    </location>
</feature>
<feature type="binding site" evidence="1">
    <location>
        <position position="174"/>
    </location>
    <ligand>
        <name>Zn(2+)</name>
        <dbReference type="ChEBI" id="CHEBI:29105"/>
        <note>catalytic</note>
    </ligand>
</feature>
<feature type="binding site" evidence="1">
    <location>
        <position position="176"/>
    </location>
    <ligand>
        <name>Zn(2+)</name>
        <dbReference type="ChEBI" id="CHEBI:29105"/>
        <note>catalytic</note>
    </ligand>
</feature>
<feature type="binding site" evidence="1">
    <location>
        <position position="187"/>
    </location>
    <ligand>
        <name>Zn(2+)</name>
        <dbReference type="ChEBI" id="CHEBI:29105"/>
        <note>catalytic</note>
    </ligand>
</feature>
<name>Y4685_BACAN</name>
<evidence type="ECO:0000255" key="1">
    <source>
        <dbReference type="PROSITE-ProRule" id="PRU01182"/>
    </source>
</evidence>
<evidence type="ECO:0000305" key="2"/>
<reference key="1">
    <citation type="journal article" date="2003" name="Nature">
        <title>The genome sequence of Bacillus anthracis Ames and comparison to closely related bacteria.</title>
        <authorList>
            <person name="Read T.D."/>
            <person name="Peterson S.N."/>
            <person name="Tourasse N.J."/>
            <person name="Baillie L.W."/>
            <person name="Paulsen I.T."/>
            <person name="Nelson K.E."/>
            <person name="Tettelin H."/>
            <person name="Fouts D.E."/>
            <person name="Eisen J.A."/>
            <person name="Gill S.R."/>
            <person name="Holtzapple E.K."/>
            <person name="Okstad O.A."/>
            <person name="Helgason E."/>
            <person name="Rilstone J."/>
            <person name="Wu M."/>
            <person name="Kolonay J.F."/>
            <person name="Beanan M.J."/>
            <person name="Dodson R.J."/>
            <person name="Brinkac L.M."/>
            <person name="Gwinn M.L."/>
            <person name="DeBoy R.T."/>
            <person name="Madpu R."/>
            <person name="Daugherty S.C."/>
            <person name="Durkin A.S."/>
            <person name="Haft D.H."/>
            <person name="Nelson W.C."/>
            <person name="Peterson J.D."/>
            <person name="Pop M."/>
            <person name="Khouri H.M."/>
            <person name="Radune D."/>
            <person name="Benton J.L."/>
            <person name="Mahamoud Y."/>
            <person name="Jiang L."/>
            <person name="Hance I.R."/>
            <person name="Weidman J.F."/>
            <person name="Berry K.J."/>
            <person name="Plaut R.D."/>
            <person name="Wolf A.M."/>
            <person name="Watkins K.L."/>
            <person name="Nierman W.C."/>
            <person name="Hazen A."/>
            <person name="Cline R.T."/>
            <person name="Redmond C."/>
            <person name="Thwaite J.E."/>
            <person name="White O."/>
            <person name="Salzberg S.L."/>
            <person name="Thomason B."/>
            <person name="Friedlander A.M."/>
            <person name="Koehler T.M."/>
            <person name="Hanna P.C."/>
            <person name="Kolstoe A.-B."/>
            <person name="Fraser C.M."/>
        </authorList>
    </citation>
    <scope>NUCLEOTIDE SEQUENCE [LARGE SCALE GENOMIC DNA]</scope>
    <source>
        <strain>Ames / isolate Porton</strain>
    </source>
</reference>
<reference key="2">
    <citation type="journal article" date="2009" name="J. Bacteriol.">
        <title>The complete genome sequence of Bacillus anthracis Ames 'Ancestor'.</title>
        <authorList>
            <person name="Ravel J."/>
            <person name="Jiang L."/>
            <person name="Stanley S.T."/>
            <person name="Wilson M.R."/>
            <person name="Decker R.S."/>
            <person name="Read T.D."/>
            <person name="Worsham P."/>
            <person name="Keim P.S."/>
            <person name="Salzberg S.L."/>
            <person name="Fraser-Liggett C.M."/>
            <person name="Rasko D.A."/>
        </authorList>
    </citation>
    <scope>NUCLEOTIDE SEQUENCE [LARGE SCALE GENOMIC DNA]</scope>
    <source>
        <strain>Ames ancestor</strain>
    </source>
</reference>
<reference key="3">
    <citation type="submission" date="2004-01" db="EMBL/GenBank/DDBJ databases">
        <title>Complete genome sequence of Bacillus anthracis Sterne.</title>
        <authorList>
            <person name="Brettin T.S."/>
            <person name="Bruce D."/>
            <person name="Challacombe J.F."/>
            <person name="Gilna P."/>
            <person name="Han C."/>
            <person name="Hill K."/>
            <person name="Hitchcock P."/>
            <person name="Jackson P."/>
            <person name="Keim P."/>
            <person name="Longmire J."/>
            <person name="Lucas S."/>
            <person name="Okinaka R."/>
            <person name="Richardson P."/>
            <person name="Rubin E."/>
            <person name="Tice H."/>
        </authorList>
    </citation>
    <scope>NUCLEOTIDE SEQUENCE [LARGE SCALE GENOMIC DNA]</scope>
    <source>
        <strain>Sterne</strain>
    </source>
</reference>
<sequence>MNGIRDVVKEEQPRERLLLEGAGSLSNRELLAVLLRTGSKEESVLKLSDKILHHFDGLRMLKDATLEELVSIHGVGVAKATQLIAAFELGRRMVRLEYQNRYSIRSPEDCATYMMEEMRFLQQEHFVCLYLNTKNQVIHRQTIFIGSLNSSIVHPREVFKEAFRRAAASIICLHNHPSGDPAPSREDIEVTKRLVECGRIIGIEVLDHIIIGDHKFVSLKEKGHI</sequence>
<comment type="similarity">
    <text evidence="2">Belongs to the UPF0758 family.</text>
</comment>
<accession>Q81LD7</accession>
<accession>Q6HSU0</accession>
<accession>Q6KM33</accession>
<proteinExistence type="inferred from homology"/>
<dbReference type="EMBL" id="AE016879">
    <property type="protein sequence ID" value="AAP28385.1"/>
    <property type="molecule type" value="Genomic_DNA"/>
</dbReference>
<dbReference type="EMBL" id="AE017334">
    <property type="protein sequence ID" value="AAT33809.1"/>
    <property type="molecule type" value="Genomic_DNA"/>
</dbReference>
<dbReference type="EMBL" id="AE017225">
    <property type="protein sequence ID" value="AAT56649.1"/>
    <property type="molecule type" value="Genomic_DNA"/>
</dbReference>
<dbReference type="RefSeq" id="NP_846899.1">
    <property type="nucleotide sequence ID" value="NC_003997.3"/>
</dbReference>
<dbReference type="RefSeq" id="YP_030598.1">
    <property type="nucleotide sequence ID" value="NC_005945.1"/>
</dbReference>
<dbReference type="SMR" id="Q81LD7"/>
<dbReference type="STRING" id="261594.GBAA_4685"/>
<dbReference type="DNASU" id="1083733"/>
<dbReference type="GeneID" id="45024326"/>
<dbReference type="KEGG" id="ban:BA_4685"/>
<dbReference type="KEGG" id="bar:GBAA_4685"/>
<dbReference type="KEGG" id="bat:BAS4351"/>
<dbReference type="PATRIC" id="fig|198094.11.peg.4651"/>
<dbReference type="eggNOG" id="COG2003">
    <property type="taxonomic scope" value="Bacteria"/>
</dbReference>
<dbReference type="HOGENOM" id="CLU_073529_0_2_9"/>
<dbReference type="OMA" id="ELMPREK"/>
<dbReference type="OrthoDB" id="9804482at2"/>
<dbReference type="Proteomes" id="UP000000427">
    <property type="component" value="Chromosome"/>
</dbReference>
<dbReference type="Proteomes" id="UP000000594">
    <property type="component" value="Chromosome"/>
</dbReference>
<dbReference type="GO" id="GO:0046872">
    <property type="term" value="F:metal ion binding"/>
    <property type="evidence" value="ECO:0007669"/>
    <property type="project" value="UniProtKB-KW"/>
</dbReference>
<dbReference type="GO" id="GO:0008237">
    <property type="term" value="F:metallopeptidase activity"/>
    <property type="evidence" value="ECO:0007669"/>
    <property type="project" value="UniProtKB-KW"/>
</dbReference>
<dbReference type="GO" id="GO:0006508">
    <property type="term" value="P:proteolysis"/>
    <property type="evidence" value="ECO:0007669"/>
    <property type="project" value="UniProtKB-KW"/>
</dbReference>
<dbReference type="CDD" id="cd08071">
    <property type="entry name" value="MPN_DUF2466"/>
    <property type="match status" value="1"/>
</dbReference>
<dbReference type="Gene3D" id="3.40.140.10">
    <property type="entry name" value="Cytidine Deaminase, domain 2"/>
    <property type="match status" value="1"/>
</dbReference>
<dbReference type="InterPro" id="IPR037518">
    <property type="entry name" value="MPN"/>
</dbReference>
<dbReference type="InterPro" id="IPR025657">
    <property type="entry name" value="RadC_JAB"/>
</dbReference>
<dbReference type="InterPro" id="IPR010994">
    <property type="entry name" value="RuvA_2-like"/>
</dbReference>
<dbReference type="InterPro" id="IPR001405">
    <property type="entry name" value="UPF0758"/>
</dbReference>
<dbReference type="InterPro" id="IPR020891">
    <property type="entry name" value="UPF0758_CS"/>
</dbReference>
<dbReference type="InterPro" id="IPR046778">
    <property type="entry name" value="UPF0758_N"/>
</dbReference>
<dbReference type="NCBIfam" id="NF000642">
    <property type="entry name" value="PRK00024.1"/>
    <property type="match status" value="1"/>
</dbReference>
<dbReference type="NCBIfam" id="TIGR00608">
    <property type="entry name" value="radc"/>
    <property type="match status" value="1"/>
</dbReference>
<dbReference type="PANTHER" id="PTHR30471">
    <property type="entry name" value="DNA REPAIR PROTEIN RADC"/>
    <property type="match status" value="1"/>
</dbReference>
<dbReference type="PANTHER" id="PTHR30471:SF3">
    <property type="entry name" value="UPF0758 PROTEIN YEES-RELATED"/>
    <property type="match status" value="1"/>
</dbReference>
<dbReference type="Pfam" id="PF04002">
    <property type="entry name" value="RadC"/>
    <property type="match status" value="1"/>
</dbReference>
<dbReference type="Pfam" id="PF20582">
    <property type="entry name" value="UPF0758_N"/>
    <property type="match status" value="1"/>
</dbReference>
<dbReference type="SUPFAM" id="SSF102712">
    <property type="entry name" value="JAB1/MPN domain"/>
    <property type="match status" value="1"/>
</dbReference>
<dbReference type="SUPFAM" id="SSF47781">
    <property type="entry name" value="RuvA domain 2-like"/>
    <property type="match status" value="1"/>
</dbReference>
<dbReference type="PROSITE" id="PS50249">
    <property type="entry name" value="MPN"/>
    <property type="match status" value="1"/>
</dbReference>
<dbReference type="PROSITE" id="PS01302">
    <property type="entry name" value="UPF0758"/>
    <property type="match status" value="1"/>
</dbReference>
<gene>
    <name type="ordered locus">BA_4685</name>
    <name type="ordered locus">GBAA_4685</name>
    <name type="ordered locus">BAS4351</name>
</gene>
<keyword id="KW-0378">Hydrolase</keyword>
<keyword id="KW-0479">Metal-binding</keyword>
<keyword id="KW-0482">Metalloprotease</keyword>
<keyword id="KW-0645">Protease</keyword>
<keyword id="KW-1185">Reference proteome</keyword>
<keyword id="KW-0862">Zinc</keyword>
<organism>
    <name type="scientific">Bacillus anthracis</name>
    <dbReference type="NCBI Taxonomy" id="1392"/>
    <lineage>
        <taxon>Bacteria</taxon>
        <taxon>Bacillati</taxon>
        <taxon>Bacillota</taxon>
        <taxon>Bacilli</taxon>
        <taxon>Bacillales</taxon>
        <taxon>Bacillaceae</taxon>
        <taxon>Bacillus</taxon>
        <taxon>Bacillus cereus group</taxon>
    </lineage>
</organism>
<protein>
    <recommendedName>
        <fullName>UPF0758 protein BA_4685/GBAA_4685/BAS4351</fullName>
    </recommendedName>
</protein>